<feature type="chain" id="PRO_0000166677" description="Phosphoenolpyruvate carboxylase 2">
    <location>
        <begin position="1"/>
        <end position="960"/>
    </location>
</feature>
<feature type="active site" evidence="1">
    <location>
        <position position="167"/>
    </location>
</feature>
<feature type="active site" evidence="1">
    <location>
        <position position="595"/>
    </location>
</feature>
<reference key="1">
    <citation type="journal article" date="1991" name="Plant Mol. Biol.">
        <title>Complete nucleotide sequence of one member of the Sorghum phosphoenolpyruvate carboxylase gene family.</title>
        <authorList>
            <person name="Lepiniec L."/>
            <person name="Santi S."/>
            <person name="Keryer E."/>
            <person name="Amiet V."/>
            <person name="Vidal J."/>
            <person name="Gadal P."/>
            <person name="Cretin C."/>
        </authorList>
    </citation>
    <scope>NUCLEOTIDE SEQUENCE [GENOMIC DNA]</scope>
</reference>
<protein>
    <recommendedName>
        <fullName>Phosphoenolpyruvate carboxylase 2</fullName>
        <shortName>PEPC 2</shortName>
        <shortName>PEPCase 2</shortName>
        <ecNumber>4.1.1.31</ecNumber>
    </recommendedName>
    <alternativeName>
        <fullName>CP28</fullName>
    </alternativeName>
</protein>
<organism>
    <name type="scientific">Sorghum bicolor</name>
    <name type="common">Sorghum</name>
    <name type="synonym">Sorghum vulgare</name>
    <dbReference type="NCBI Taxonomy" id="4558"/>
    <lineage>
        <taxon>Eukaryota</taxon>
        <taxon>Viridiplantae</taxon>
        <taxon>Streptophyta</taxon>
        <taxon>Embryophyta</taxon>
        <taxon>Tracheophyta</taxon>
        <taxon>Spermatophyta</taxon>
        <taxon>Magnoliopsida</taxon>
        <taxon>Liliopsida</taxon>
        <taxon>Poales</taxon>
        <taxon>Poaceae</taxon>
        <taxon>PACMAD clade</taxon>
        <taxon>Panicoideae</taxon>
        <taxon>Andropogonodae</taxon>
        <taxon>Andropogoneae</taxon>
        <taxon>Sorghinae</taxon>
        <taxon>Sorghum</taxon>
    </lineage>
</organism>
<comment type="function">
    <text>Through the carboxylation of phosphoenolpyruvate (PEP) it forms oxaloacetate, a four-carbon dicarboxylic acid source for the tricarboxylic acid cycle.</text>
</comment>
<comment type="catalytic activity">
    <reaction>
        <text>oxaloacetate + phosphate = phosphoenolpyruvate + hydrogencarbonate</text>
        <dbReference type="Rhea" id="RHEA:28370"/>
        <dbReference type="ChEBI" id="CHEBI:16452"/>
        <dbReference type="ChEBI" id="CHEBI:17544"/>
        <dbReference type="ChEBI" id="CHEBI:43474"/>
        <dbReference type="ChEBI" id="CHEBI:58702"/>
        <dbReference type="EC" id="4.1.1.31"/>
    </reaction>
</comment>
<comment type="cofactor">
    <cofactor evidence="1">
        <name>Mg(2+)</name>
        <dbReference type="ChEBI" id="CHEBI:18420"/>
    </cofactor>
</comment>
<comment type="pathway">
    <text>Photosynthesis; C3 acid pathway.</text>
</comment>
<comment type="subunit">
    <text>Homotetramer.</text>
</comment>
<comment type="subcellular location">
    <subcellularLocation>
        <location>Cytoplasm</location>
    </subcellularLocation>
</comment>
<comment type="similarity">
    <text evidence="2">Belongs to the PEPCase type 1 family.</text>
</comment>
<proteinExistence type="inferred from homology"/>
<sequence>MERLSSIDAQLRMLVPGKVSEDDKLIEYDALLLDRFLDILQDLHGDDLKEMVQECYEVAAEYETKHDLQKLDELGKMITSLDPGDSIVIAKSFSHMLNLANLAEEVQIAYRRRIKLKKGDFADENSAITESDIEETLKRLVVDLKKSPAEVFDALKSQTVDLVLTAHPTQSVRRSLLQKHSRIRNCLVQLYSKDITPDDKQELDEALQREIQAAFRTDEIRRTQPTPQDEMRAGMSYFHETIWKGVPKFLRRVDTALKNIGINERVPYNAPLIQFSSWMGGDRDGNPRVTPEVTRDVCLLARMMASNLYCSQIEDLMFELSMWRCSDELRMRADELHRSTKKDAKHYIEFWKKVPPNEPYRVILSDVRDKLYNTRERSRELLSSGHSDIPEEATLTTVEQLLEPLELCYRSLCACGDRVIADGSLLDFLRQVSTFGLSLVRLDIRQESDRHTDVLDAITTYLGIGSYREWPEERRQEWLLSELNGKRPLFGPDLPKTEEIADVLDTFHVIAELPADNFGAYIISMATAPSDVLAVELLQRECHVKTPLRVVPLFEKLADLEAAPAALARLFSIDWYRQRINGKQEVMIGYSDSGKDAGRLSAAWQLYKAQEELIKVAKDFGVKLTMFHGRGGTVGRGGGPTHLAILSQPPDTIHGSLRVTVQGEVIEQSFGEEHLSFRTLQRFTAATLEHGMHPPNAPKPEWRTLLDEMAVVATEEYRSIVFQEPRFVEYFRLATPETEYGRMNIGSRPSKRKPSGGIESLRAIPWIFAWTQTRFHLPVWLGFGGAFKHVLQKDIRNLHMLQEMYNEWPFFRVTIDLVEMVFAKGNPGIAALYDKLLVSEELRPLGEKLRANYEETQKLLLQVAGHRDLLEGDPYLKQRLRLRDAYITTLNVCQAYTLKRIRDPDYHVALRPHLSKEIMDPTKAASELVKLNPGSEYAPGLEDTLILTMKGIAAGLQNTG</sequence>
<name>CAPP2_SORBI</name>
<accession>P29194</accession>
<evidence type="ECO:0000250" key="1"/>
<evidence type="ECO:0000305" key="2"/>
<keyword id="KW-0021">Allosteric enzyme</keyword>
<keyword id="KW-0120">Carbon dioxide fixation</keyword>
<keyword id="KW-0963">Cytoplasm</keyword>
<keyword id="KW-0456">Lyase</keyword>
<keyword id="KW-0460">Magnesium</keyword>
<keyword id="KW-0602">Photosynthesis</keyword>
<dbReference type="EC" id="4.1.1.31"/>
<dbReference type="EMBL" id="X59925">
    <property type="protein sequence ID" value="CAA42549.1"/>
    <property type="molecule type" value="Genomic_DNA"/>
</dbReference>
<dbReference type="PIR" id="S18240">
    <property type="entry name" value="S18240"/>
</dbReference>
<dbReference type="SMR" id="P29194"/>
<dbReference type="eggNOG" id="ENOG502QPVS">
    <property type="taxonomic scope" value="Eukaryota"/>
</dbReference>
<dbReference type="UniPathway" id="UPA00321"/>
<dbReference type="ExpressionAtlas" id="P29194">
    <property type="expression patterns" value="baseline and differential"/>
</dbReference>
<dbReference type="GO" id="GO:0005737">
    <property type="term" value="C:cytoplasm"/>
    <property type="evidence" value="ECO:0007669"/>
    <property type="project" value="UniProtKB-SubCell"/>
</dbReference>
<dbReference type="GO" id="GO:0008964">
    <property type="term" value="F:phosphoenolpyruvate carboxylase activity"/>
    <property type="evidence" value="ECO:0007669"/>
    <property type="project" value="UniProtKB-EC"/>
</dbReference>
<dbReference type="GO" id="GO:0015977">
    <property type="term" value="P:carbon fixation"/>
    <property type="evidence" value="ECO:0007669"/>
    <property type="project" value="UniProtKB-KW"/>
</dbReference>
<dbReference type="GO" id="GO:0015979">
    <property type="term" value="P:photosynthesis"/>
    <property type="evidence" value="ECO:0007669"/>
    <property type="project" value="UniProtKB-KW"/>
</dbReference>
<dbReference type="GO" id="GO:0006099">
    <property type="term" value="P:tricarboxylic acid cycle"/>
    <property type="evidence" value="ECO:0007669"/>
    <property type="project" value="InterPro"/>
</dbReference>
<dbReference type="FunFam" id="1.20.1440.90:FF:000001">
    <property type="entry name" value="Phosphoenolpyruvate carboxylase 1"/>
    <property type="match status" value="1"/>
</dbReference>
<dbReference type="Gene3D" id="1.20.1440.90">
    <property type="entry name" value="Phosphoenolpyruvate/pyruvate domain"/>
    <property type="match status" value="1"/>
</dbReference>
<dbReference type="HAMAP" id="MF_00595">
    <property type="entry name" value="PEPcase_type1"/>
    <property type="match status" value="1"/>
</dbReference>
<dbReference type="InterPro" id="IPR021135">
    <property type="entry name" value="PEP_COase"/>
</dbReference>
<dbReference type="InterPro" id="IPR022805">
    <property type="entry name" value="PEP_COase_bac/pln-type"/>
</dbReference>
<dbReference type="InterPro" id="IPR018129">
    <property type="entry name" value="PEP_COase_Lys_AS"/>
</dbReference>
<dbReference type="InterPro" id="IPR033129">
    <property type="entry name" value="PEPCASE_His_AS"/>
</dbReference>
<dbReference type="InterPro" id="IPR015813">
    <property type="entry name" value="Pyrv/PenolPyrv_kinase-like_dom"/>
</dbReference>
<dbReference type="NCBIfam" id="NF000584">
    <property type="entry name" value="PRK00009.1"/>
    <property type="match status" value="1"/>
</dbReference>
<dbReference type="PANTHER" id="PTHR30523">
    <property type="entry name" value="PHOSPHOENOLPYRUVATE CARBOXYLASE"/>
    <property type="match status" value="1"/>
</dbReference>
<dbReference type="PANTHER" id="PTHR30523:SF22">
    <property type="entry name" value="PHOSPHOENOLPYRUVATE CARBOXYLASE 2"/>
    <property type="match status" value="1"/>
</dbReference>
<dbReference type="Pfam" id="PF00311">
    <property type="entry name" value="PEPcase"/>
    <property type="match status" value="1"/>
</dbReference>
<dbReference type="PRINTS" id="PR00150">
    <property type="entry name" value="PEPCARBXLASE"/>
</dbReference>
<dbReference type="SUPFAM" id="SSF51621">
    <property type="entry name" value="Phosphoenolpyruvate/pyruvate domain"/>
    <property type="match status" value="1"/>
</dbReference>
<dbReference type="PROSITE" id="PS00781">
    <property type="entry name" value="PEPCASE_1"/>
    <property type="match status" value="1"/>
</dbReference>
<dbReference type="PROSITE" id="PS00393">
    <property type="entry name" value="PEPCASE_2"/>
    <property type="match status" value="1"/>
</dbReference>